<reference key="1">
    <citation type="journal article" date="2010" name="PLoS Genet.">
        <title>Genome sequence of the plant growth promoting endophytic bacterium Enterobacter sp. 638.</title>
        <authorList>
            <person name="Taghavi S."/>
            <person name="van der Lelie D."/>
            <person name="Hoffman A."/>
            <person name="Zhang Y.B."/>
            <person name="Walla M.D."/>
            <person name="Vangronsveld J."/>
            <person name="Newman L."/>
            <person name="Monchy S."/>
        </authorList>
    </citation>
    <scope>NUCLEOTIDE SEQUENCE [LARGE SCALE GENOMIC DNA]</scope>
    <source>
        <strain>638</strain>
    </source>
</reference>
<sequence>MQTITNAWFVQGMIKATTDAWLKGWDERNGGNLTLRLDNADIAPFEADFHQKPRYIALSQPMPLLANTAFIVTGSGKFFRNVQLDPTANLGVVKVDSDGAGYHILWGLTNEAVPTSELPAHFLSHCERIKATDGKDRVIMHCHATNLIALTYVLENDSAFITRKLWEGSTECLVVFPDGVGILPWMVPGTDEIGQATAQDMQKHSLVLWPFHGVFGSGPTLDEAFGLIDTAEKSAEVLVKVYSMGGMKQTITQEELIALGKRFGVTPMKSALELYK</sequence>
<gene>
    <name evidence="1" type="primary">rhaD</name>
    <name type="ordered locus">Ent638_4069</name>
</gene>
<protein>
    <recommendedName>
        <fullName evidence="1">Rhamnulose-1-phosphate aldolase</fullName>
        <ecNumber evidence="1">4.1.2.19</ecNumber>
    </recommendedName>
</protein>
<proteinExistence type="inferred from homology"/>
<organism>
    <name type="scientific">Enterobacter sp. (strain 638)</name>
    <dbReference type="NCBI Taxonomy" id="399742"/>
    <lineage>
        <taxon>Bacteria</taxon>
        <taxon>Pseudomonadati</taxon>
        <taxon>Pseudomonadota</taxon>
        <taxon>Gammaproteobacteria</taxon>
        <taxon>Enterobacterales</taxon>
        <taxon>Enterobacteriaceae</taxon>
        <taxon>Enterobacter</taxon>
    </lineage>
</organism>
<keyword id="KW-0963">Cytoplasm</keyword>
<keyword id="KW-0456">Lyase</keyword>
<keyword id="KW-0479">Metal-binding</keyword>
<keyword id="KW-0684">Rhamnose metabolism</keyword>
<keyword id="KW-0862">Zinc</keyword>
<evidence type="ECO:0000255" key="1">
    <source>
        <dbReference type="HAMAP-Rule" id="MF_00770"/>
    </source>
</evidence>
<comment type="function">
    <text evidence="1">Catalyzes the reversible cleavage of L-rhamnulose-1-phosphate to dihydroxyacetone phosphate (DHAP) and L-lactaldehyde.</text>
</comment>
<comment type="catalytic activity">
    <reaction evidence="1">
        <text>L-rhamnulose 1-phosphate = (S)-lactaldehyde + dihydroxyacetone phosphate</text>
        <dbReference type="Rhea" id="RHEA:19689"/>
        <dbReference type="ChEBI" id="CHEBI:18041"/>
        <dbReference type="ChEBI" id="CHEBI:57642"/>
        <dbReference type="ChEBI" id="CHEBI:58313"/>
        <dbReference type="EC" id="4.1.2.19"/>
    </reaction>
</comment>
<comment type="cofactor">
    <cofactor evidence="1">
        <name>Zn(2+)</name>
        <dbReference type="ChEBI" id="CHEBI:29105"/>
    </cofactor>
    <text evidence="1">Binds 1 zinc ion per subunit.</text>
</comment>
<comment type="pathway">
    <text evidence="1">Carbohydrate degradation; L-rhamnose degradation; glycerone phosphate from L-rhamnose: step 3/3.</text>
</comment>
<comment type="subunit">
    <text evidence="1">Homotetramer.</text>
</comment>
<comment type="subcellular location">
    <subcellularLocation>
        <location evidence="1">Cytoplasm</location>
    </subcellularLocation>
</comment>
<comment type="similarity">
    <text evidence="1">Belongs to the aldolase class II family. RhaD subfamily.</text>
</comment>
<feature type="chain" id="PRO_1000062240" description="Rhamnulose-1-phosphate aldolase">
    <location>
        <begin position="1"/>
        <end position="276"/>
    </location>
</feature>
<feature type="active site" evidence="1">
    <location>
        <position position="117"/>
    </location>
</feature>
<feature type="binding site" evidence="1">
    <location>
        <position position="141"/>
    </location>
    <ligand>
        <name>Zn(2+)</name>
        <dbReference type="ChEBI" id="CHEBI:29105"/>
    </ligand>
</feature>
<feature type="binding site" evidence="1">
    <location>
        <position position="143"/>
    </location>
    <ligand>
        <name>Zn(2+)</name>
        <dbReference type="ChEBI" id="CHEBI:29105"/>
    </ligand>
</feature>
<feature type="binding site" evidence="1">
    <location>
        <position position="212"/>
    </location>
    <ligand>
        <name>Zn(2+)</name>
        <dbReference type="ChEBI" id="CHEBI:29105"/>
    </ligand>
</feature>
<dbReference type="EC" id="4.1.2.19" evidence="1"/>
<dbReference type="EMBL" id="CP000653">
    <property type="protein sequence ID" value="ABP62724.1"/>
    <property type="molecule type" value="Genomic_DNA"/>
</dbReference>
<dbReference type="RefSeq" id="WP_015961028.1">
    <property type="nucleotide sequence ID" value="NC_009436.1"/>
</dbReference>
<dbReference type="SMR" id="A4WG94"/>
<dbReference type="STRING" id="399742.Ent638_4069"/>
<dbReference type="KEGG" id="ent:Ent638_4069"/>
<dbReference type="eggNOG" id="COG0235">
    <property type="taxonomic scope" value="Bacteria"/>
</dbReference>
<dbReference type="HOGENOM" id="CLU_076831_0_0_6"/>
<dbReference type="OrthoDB" id="9784634at2"/>
<dbReference type="UniPathway" id="UPA00541">
    <property type="reaction ID" value="UER00603"/>
</dbReference>
<dbReference type="Proteomes" id="UP000000230">
    <property type="component" value="Chromosome"/>
</dbReference>
<dbReference type="GO" id="GO:0005829">
    <property type="term" value="C:cytosol"/>
    <property type="evidence" value="ECO:0007669"/>
    <property type="project" value="TreeGrafter"/>
</dbReference>
<dbReference type="GO" id="GO:0046872">
    <property type="term" value="F:metal ion binding"/>
    <property type="evidence" value="ECO:0007669"/>
    <property type="project" value="UniProtKB-KW"/>
</dbReference>
<dbReference type="GO" id="GO:0008994">
    <property type="term" value="F:rhamnulose-1-phosphate aldolase activity"/>
    <property type="evidence" value="ECO:0007669"/>
    <property type="project" value="UniProtKB-UniRule"/>
</dbReference>
<dbReference type="GO" id="GO:0019323">
    <property type="term" value="P:pentose catabolic process"/>
    <property type="evidence" value="ECO:0007669"/>
    <property type="project" value="TreeGrafter"/>
</dbReference>
<dbReference type="GO" id="GO:0019301">
    <property type="term" value="P:rhamnose catabolic process"/>
    <property type="evidence" value="ECO:0007669"/>
    <property type="project" value="UniProtKB-UniRule"/>
</dbReference>
<dbReference type="CDD" id="cd00398">
    <property type="entry name" value="Aldolase_II"/>
    <property type="match status" value="1"/>
</dbReference>
<dbReference type="FunFam" id="3.40.225.10:FF:000006">
    <property type="entry name" value="Rhamnulose-1-phosphate aldolase"/>
    <property type="match status" value="1"/>
</dbReference>
<dbReference type="Gene3D" id="3.40.225.10">
    <property type="entry name" value="Class II aldolase/adducin N-terminal domain"/>
    <property type="match status" value="1"/>
</dbReference>
<dbReference type="HAMAP" id="MF_00770">
    <property type="entry name" value="RhaD"/>
    <property type="match status" value="1"/>
</dbReference>
<dbReference type="InterPro" id="IPR050197">
    <property type="entry name" value="Aldolase_class_II_sugar_metab"/>
</dbReference>
<dbReference type="InterPro" id="IPR001303">
    <property type="entry name" value="Aldolase_II/adducin_N"/>
</dbReference>
<dbReference type="InterPro" id="IPR036409">
    <property type="entry name" value="Aldolase_II/adducin_N_sf"/>
</dbReference>
<dbReference type="InterPro" id="IPR013447">
    <property type="entry name" value="Rhamnulose-1-P_Aldolase"/>
</dbReference>
<dbReference type="NCBIfam" id="NF002963">
    <property type="entry name" value="PRK03634.1"/>
    <property type="match status" value="1"/>
</dbReference>
<dbReference type="NCBIfam" id="TIGR02624">
    <property type="entry name" value="rhamnu_1P_ald"/>
    <property type="match status" value="1"/>
</dbReference>
<dbReference type="PANTHER" id="PTHR22789">
    <property type="entry name" value="FUCULOSE PHOSPHATE ALDOLASE"/>
    <property type="match status" value="1"/>
</dbReference>
<dbReference type="PANTHER" id="PTHR22789:SF16">
    <property type="entry name" value="RHAMNULOSE-1-PHOSPHATE ALDOLASE"/>
    <property type="match status" value="1"/>
</dbReference>
<dbReference type="Pfam" id="PF00596">
    <property type="entry name" value="Aldolase_II"/>
    <property type="match status" value="1"/>
</dbReference>
<dbReference type="SMART" id="SM01007">
    <property type="entry name" value="Aldolase_II"/>
    <property type="match status" value="1"/>
</dbReference>
<dbReference type="SUPFAM" id="SSF53639">
    <property type="entry name" value="AraD/HMP-PK domain-like"/>
    <property type="match status" value="1"/>
</dbReference>
<accession>A4WG94</accession>
<name>RHAD_ENT38</name>